<comment type="function">
    <text evidence="1">One of the primary rRNA binding proteins, it binds specifically to the 5'-end of 16S ribosomal RNA.</text>
</comment>
<comment type="subunit">
    <text evidence="1">Part of the 30S ribosomal subunit.</text>
</comment>
<comment type="similarity">
    <text evidence="1">Belongs to the universal ribosomal protein uS17 family.</text>
</comment>
<sequence length="102" mass="12049">MEQTEEHTDTHTDEQDEAVDRNDRKERIGVVESAKMDKTITVSVRRQMKHPMYGKYLERSSTFMAHDEGDEANEGDTVRIMETRPISKNKRWRLVEIIERAK</sequence>
<accession>Q2S3Q5</accession>
<protein>
    <recommendedName>
        <fullName evidence="1">Small ribosomal subunit protein uS17</fullName>
    </recommendedName>
    <alternativeName>
        <fullName evidence="3">30S ribosomal protein S17</fullName>
    </alternativeName>
</protein>
<gene>
    <name evidence="1" type="primary">rpsQ</name>
    <name type="ordered locus">SRU_1044</name>
</gene>
<name>RS17_SALRD</name>
<evidence type="ECO:0000255" key="1">
    <source>
        <dbReference type="HAMAP-Rule" id="MF_01345"/>
    </source>
</evidence>
<evidence type="ECO:0000256" key="2">
    <source>
        <dbReference type="SAM" id="MobiDB-lite"/>
    </source>
</evidence>
<evidence type="ECO:0000305" key="3"/>
<reference key="1">
    <citation type="journal article" date="2005" name="Proc. Natl. Acad. Sci. U.S.A.">
        <title>The genome of Salinibacter ruber: convergence and gene exchange among hyperhalophilic bacteria and archaea.</title>
        <authorList>
            <person name="Mongodin E.F."/>
            <person name="Nelson K.E."/>
            <person name="Daugherty S."/>
            <person name="DeBoy R.T."/>
            <person name="Wister J."/>
            <person name="Khouri H."/>
            <person name="Weidman J."/>
            <person name="Walsh D.A."/>
            <person name="Papke R.T."/>
            <person name="Sanchez Perez G."/>
            <person name="Sharma A.K."/>
            <person name="Nesbo C.L."/>
            <person name="MacLeod D."/>
            <person name="Bapteste E."/>
            <person name="Doolittle W.F."/>
            <person name="Charlebois R.L."/>
            <person name="Legault B."/>
            <person name="Rodriguez-Valera F."/>
        </authorList>
    </citation>
    <scope>NUCLEOTIDE SEQUENCE [LARGE SCALE GENOMIC DNA]</scope>
    <source>
        <strain>DSM 13855 / CECT 5946 / M31</strain>
    </source>
</reference>
<keyword id="KW-1185">Reference proteome</keyword>
<keyword id="KW-0687">Ribonucleoprotein</keyword>
<keyword id="KW-0689">Ribosomal protein</keyword>
<keyword id="KW-0694">RNA-binding</keyword>
<keyword id="KW-0699">rRNA-binding</keyword>
<proteinExistence type="inferred from homology"/>
<feature type="chain" id="PRO_0000233559" description="Small ribosomal subunit protein uS17">
    <location>
        <begin position="1"/>
        <end position="102"/>
    </location>
</feature>
<feature type="region of interest" description="Disordered" evidence="2">
    <location>
        <begin position="1"/>
        <end position="27"/>
    </location>
</feature>
<dbReference type="EMBL" id="CP000159">
    <property type="protein sequence ID" value="ABC44023.1"/>
    <property type="molecule type" value="Genomic_DNA"/>
</dbReference>
<dbReference type="RefSeq" id="WP_011403804.1">
    <property type="nucleotide sequence ID" value="NC_007677.1"/>
</dbReference>
<dbReference type="RefSeq" id="YP_445176.1">
    <property type="nucleotide sequence ID" value="NC_007677.1"/>
</dbReference>
<dbReference type="SMR" id="Q2S3Q5"/>
<dbReference type="STRING" id="309807.SRU_1044"/>
<dbReference type="EnsemblBacteria" id="ABC44023">
    <property type="protein sequence ID" value="ABC44023"/>
    <property type="gene ID" value="SRU_1044"/>
</dbReference>
<dbReference type="GeneID" id="83727973"/>
<dbReference type="KEGG" id="sru:SRU_1044"/>
<dbReference type="PATRIC" id="fig|309807.25.peg.1082"/>
<dbReference type="eggNOG" id="COG0186">
    <property type="taxonomic scope" value="Bacteria"/>
</dbReference>
<dbReference type="HOGENOM" id="CLU_073626_1_0_10"/>
<dbReference type="OrthoDB" id="9811714at2"/>
<dbReference type="Proteomes" id="UP000008674">
    <property type="component" value="Chromosome"/>
</dbReference>
<dbReference type="GO" id="GO:0022627">
    <property type="term" value="C:cytosolic small ribosomal subunit"/>
    <property type="evidence" value="ECO:0007669"/>
    <property type="project" value="TreeGrafter"/>
</dbReference>
<dbReference type="GO" id="GO:0019843">
    <property type="term" value="F:rRNA binding"/>
    <property type="evidence" value="ECO:0007669"/>
    <property type="project" value="UniProtKB-UniRule"/>
</dbReference>
<dbReference type="GO" id="GO:0003735">
    <property type="term" value="F:structural constituent of ribosome"/>
    <property type="evidence" value="ECO:0007669"/>
    <property type="project" value="InterPro"/>
</dbReference>
<dbReference type="GO" id="GO:0006412">
    <property type="term" value="P:translation"/>
    <property type="evidence" value="ECO:0007669"/>
    <property type="project" value="UniProtKB-UniRule"/>
</dbReference>
<dbReference type="CDD" id="cd00364">
    <property type="entry name" value="Ribosomal_uS17"/>
    <property type="match status" value="1"/>
</dbReference>
<dbReference type="Gene3D" id="2.40.50.140">
    <property type="entry name" value="Nucleic acid-binding proteins"/>
    <property type="match status" value="1"/>
</dbReference>
<dbReference type="HAMAP" id="MF_01345_B">
    <property type="entry name" value="Ribosomal_uS17_B"/>
    <property type="match status" value="1"/>
</dbReference>
<dbReference type="InterPro" id="IPR012340">
    <property type="entry name" value="NA-bd_OB-fold"/>
</dbReference>
<dbReference type="InterPro" id="IPR000266">
    <property type="entry name" value="Ribosomal_uS17"/>
</dbReference>
<dbReference type="InterPro" id="IPR019984">
    <property type="entry name" value="Ribosomal_uS17_bact/chlr"/>
</dbReference>
<dbReference type="InterPro" id="IPR019979">
    <property type="entry name" value="Ribosomal_uS17_CS"/>
</dbReference>
<dbReference type="NCBIfam" id="NF004123">
    <property type="entry name" value="PRK05610.1"/>
    <property type="match status" value="1"/>
</dbReference>
<dbReference type="NCBIfam" id="TIGR03635">
    <property type="entry name" value="uS17_bact"/>
    <property type="match status" value="1"/>
</dbReference>
<dbReference type="PANTHER" id="PTHR10744">
    <property type="entry name" value="40S RIBOSOMAL PROTEIN S11 FAMILY MEMBER"/>
    <property type="match status" value="1"/>
</dbReference>
<dbReference type="PANTHER" id="PTHR10744:SF1">
    <property type="entry name" value="SMALL RIBOSOMAL SUBUNIT PROTEIN US17M"/>
    <property type="match status" value="1"/>
</dbReference>
<dbReference type="Pfam" id="PF00366">
    <property type="entry name" value="Ribosomal_S17"/>
    <property type="match status" value="1"/>
</dbReference>
<dbReference type="PRINTS" id="PR00973">
    <property type="entry name" value="RIBOSOMALS17"/>
</dbReference>
<dbReference type="SUPFAM" id="SSF50249">
    <property type="entry name" value="Nucleic acid-binding proteins"/>
    <property type="match status" value="1"/>
</dbReference>
<dbReference type="PROSITE" id="PS00056">
    <property type="entry name" value="RIBOSOMAL_S17"/>
    <property type="match status" value="1"/>
</dbReference>
<organism>
    <name type="scientific">Salinibacter ruber (strain DSM 13855 / M31)</name>
    <dbReference type="NCBI Taxonomy" id="309807"/>
    <lineage>
        <taxon>Bacteria</taxon>
        <taxon>Pseudomonadati</taxon>
        <taxon>Rhodothermota</taxon>
        <taxon>Rhodothermia</taxon>
        <taxon>Rhodothermales</taxon>
        <taxon>Salinibacteraceae</taxon>
        <taxon>Salinibacter</taxon>
    </lineage>
</organism>